<evidence type="ECO:0000255" key="1">
    <source>
        <dbReference type="HAMAP-Rule" id="MF_00252"/>
    </source>
</evidence>
<proteinExistence type="inferred from homology"/>
<comment type="catalytic activity">
    <reaction evidence="1">
        <text>tRNA(Lys) + L-lysine + ATP = L-lysyl-tRNA(Lys) + AMP + diphosphate</text>
        <dbReference type="Rhea" id="RHEA:20792"/>
        <dbReference type="Rhea" id="RHEA-COMP:9696"/>
        <dbReference type="Rhea" id="RHEA-COMP:9697"/>
        <dbReference type="ChEBI" id="CHEBI:30616"/>
        <dbReference type="ChEBI" id="CHEBI:32551"/>
        <dbReference type="ChEBI" id="CHEBI:33019"/>
        <dbReference type="ChEBI" id="CHEBI:78442"/>
        <dbReference type="ChEBI" id="CHEBI:78529"/>
        <dbReference type="ChEBI" id="CHEBI:456215"/>
        <dbReference type="EC" id="6.1.1.6"/>
    </reaction>
</comment>
<comment type="cofactor">
    <cofactor evidence="1">
        <name>Mg(2+)</name>
        <dbReference type="ChEBI" id="CHEBI:18420"/>
    </cofactor>
    <text evidence="1">Binds 3 Mg(2+) ions per subunit.</text>
</comment>
<comment type="subunit">
    <text evidence="1">Homodimer.</text>
</comment>
<comment type="subcellular location">
    <subcellularLocation>
        <location evidence="1">Cytoplasm</location>
    </subcellularLocation>
</comment>
<comment type="similarity">
    <text evidence="1">Belongs to the class-II aminoacyl-tRNA synthetase family.</text>
</comment>
<keyword id="KW-0030">Aminoacyl-tRNA synthetase</keyword>
<keyword id="KW-0067">ATP-binding</keyword>
<keyword id="KW-0963">Cytoplasm</keyword>
<keyword id="KW-0436">Ligase</keyword>
<keyword id="KW-0460">Magnesium</keyword>
<keyword id="KW-0479">Metal-binding</keyword>
<keyword id="KW-0547">Nucleotide-binding</keyword>
<keyword id="KW-0648">Protein biosynthesis</keyword>
<dbReference type="EC" id="6.1.1.6" evidence="1"/>
<dbReference type="EMBL" id="CP000546">
    <property type="protein sequence ID" value="ABN03215.1"/>
    <property type="molecule type" value="Genomic_DNA"/>
</dbReference>
<dbReference type="RefSeq" id="WP_004192783.1">
    <property type="nucleotide sequence ID" value="NC_008836.1"/>
</dbReference>
<dbReference type="SMR" id="A2SAT3"/>
<dbReference type="GeneID" id="93060838"/>
<dbReference type="KEGG" id="bml:BMA10229_A3111"/>
<dbReference type="HOGENOM" id="CLU_008255_6_0_4"/>
<dbReference type="Proteomes" id="UP000002283">
    <property type="component" value="Chromosome I"/>
</dbReference>
<dbReference type="GO" id="GO:0005829">
    <property type="term" value="C:cytosol"/>
    <property type="evidence" value="ECO:0007669"/>
    <property type="project" value="TreeGrafter"/>
</dbReference>
<dbReference type="GO" id="GO:0005524">
    <property type="term" value="F:ATP binding"/>
    <property type="evidence" value="ECO:0007669"/>
    <property type="project" value="UniProtKB-UniRule"/>
</dbReference>
<dbReference type="GO" id="GO:0004824">
    <property type="term" value="F:lysine-tRNA ligase activity"/>
    <property type="evidence" value="ECO:0007669"/>
    <property type="project" value="UniProtKB-UniRule"/>
</dbReference>
<dbReference type="GO" id="GO:0000287">
    <property type="term" value="F:magnesium ion binding"/>
    <property type="evidence" value="ECO:0007669"/>
    <property type="project" value="UniProtKB-UniRule"/>
</dbReference>
<dbReference type="GO" id="GO:0000049">
    <property type="term" value="F:tRNA binding"/>
    <property type="evidence" value="ECO:0007669"/>
    <property type="project" value="TreeGrafter"/>
</dbReference>
<dbReference type="GO" id="GO:0006430">
    <property type="term" value="P:lysyl-tRNA aminoacylation"/>
    <property type="evidence" value="ECO:0007669"/>
    <property type="project" value="UniProtKB-UniRule"/>
</dbReference>
<dbReference type="CDD" id="cd00775">
    <property type="entry name" value="LysRS_core"/>
    <property type="match status" value="1"/>
</dbReference>
<dbReference type="CDD" id="cd04322">
    <property type="entry name" value="LysRS_N"/>
    <property type="match status" value="1"/>
</dbReference>
<dbReference type="FunFam" id="2.40.50.140:FF:000024">
    <property type="entry name" value="Lysine--tRNA ligase"/>
    <property type="match status" value="1"/>
</dbReference>
<dbReference type="FunFam" id="3.30.930.10:FF:000001">
    <property type="entry name" value="Lysine--tRNA ligase"/>
    <property type="match status" value="1"/>
</dbReference>
<dbReference type="Gene3D" id="3.30.930.10">
    <property type="entry name" value="Bira Bifunctional Protein, Domain 2"/>
    <property type="match status" value="1"/>
</dbReference>
<dbReference type="Gene3D" id="2.40.50.140">
    <property type="entry name" value="Nucleic acid-binding proteins"/>
    <property type="match status" value="1"/>
</dbReference>
<dbReference type="HAMAP" id="MF_00252">
    <property type="entry name" value="Lys_tRNA_synth_class2"/>
    <property type="match status" value="1"/>
</dbReference>
<dbReference type="InterPro" id="IPR004364">
    <property type="entry name" value="Aa-tRNA-synt_II"/>
</dbReference>
<dbReference type="InterPro" id="IPR006195">
    <property type="entry name" value="aa-tRNA-synth_II"/>
</dbReference>
<dbReference type="InterPro" id="IPR045864">
    <property type="entry name" value="aa-tRNA-synth_II/BPL/LPL"/>
</dbReference>
<dbReference type="InterPro" id="IPR002313">
    <property type="entry name" value="Lys-tRNA-ligase_II"/>
</dbReference>
<dbReference type="InterPro" id="IPR044136">
    <property type="entry name" value="Lys-tRNA-ligase_II_N"/>
</dbReference>
<dbReference type="InterPro" id="IPR018149">
    <property type="entry name" value="Lys-tRNA-synth_II_C"/>
</dbReference>
<dbReference type="InterPro" id="IPR012340">
    <property type="entry name" value="NA-bd_OB-fold"/>
</dbReference>
<dbReference type="InterPro" id="IPR004365">
    <property type="entry name" value="NA-bd_OB_tRNA"/>
</dbReference>
<dbReference type="NCBIfam" id="TIGR00499">
    <property type="entry name" value="lysS_bact"/>
    <property type="match status" value="1"/>
</dbReference>
<dbReference type="NCBIfam" id="NF001756">
    <property type="entry name" value="PRK00484.1"/>
    <property type="match status" value="1"/>
</dbReference>
<dbReference type="PANTHER" id="PTHR42918:SF15">
    <property type="entry name" value="LYSINE--TRNA LIGASE, CHLOROPLASTIC_MITOCHONDRIAL"/>
    <property type="match status" value="1"/>
</dbReference>
<dbReference type="PANTHER" id="PTHR42918">
    <property type="entry name" value="LYSYL-TRNA SYNTHETASE"/>
    <property type="match status" value="1"/>
</dbReference>
<dbReference type="Pfam" id="PF00152">
    <property type="entry name" value="tRNA-synt_2"/>
    <property type="match status" value="1"/>
</dbReference>
<dbReference type="Pfam" id="PF01336">
    <property type="entry name" value="tRNA_anti-codon"/>
    <property type="match status" value="1"/>
</dbReference>
<dbReference type="PRINTS" id="PR00982">
    <property type="entry name" value="TRNASYNTHLYS"/>
</dbReference>
<dbReference type="SUPFAM" id="SSF55681">
    <property type="entry name" value="Class II aaRS and biotin synthetases"/>
    <property type="match status" value="1"/>
</dbReference>
<dbReference type="SUPFAM" id="SSF50249">
    <property type="entry name" value="Nucleic acid-binding proteins"/>
    <property type="match status" value="1"/>
</dbReference>
<dbReference type="PROSITE" id="PS50862">
    <property type="entry name" value="AA_TRNA_LIGASE_II"/>
    <property type="match status" value="1"/>
</dbReference>
<accession>A2SAT3</accession>
<organism>
    <name type="scientific">Burkholderia mallei (strain NCTC 10229)</name>
    <dbReference type="NCBI Taxonomy" id="412022"/>
    <lineage>
        <taxon>Bacteria</taxon>
        <taxon>Pseudomonadati</taxon>
        <taxon>Pseudomonadota</taxon>
        <taxon>Betaproteobacteria</taxon>
        <taxon>Burkholderiales</taxon>
        <taxon>Burkholderiaceae</taxon>
        <taxon>Burkholderia</taxon>
        <taxon>pseudomallei group</taxon>
    </lineage>
</organism>
<sequence length="508" mass="57202">MTEPTQPQAAVAADENQIVAERRDKLRALRDQGIAYPNDFQPTHHAAGLQTEYADADKEALDAKALDVAVAGRMMLKRVMGKASFATVQDGSGQIQFFVTPADVGAETYDAFKKWDLGDIVAARGVLFRTNKGELSVKCTELRLLAKALRPLPDKFHGLADQETRYRQRYVDLIVTPETRATFRARTKAIASIRKFMSDADFMEVETPMLHPIPGGAAAKPFVTHHNALDMQMFLRIAPELYLKRLIVGGFERVFEINRNFRNEGVSPRHNPEFTMMEFYAAYTDYRWLMDFTERLIRQAAVDALGTATIRYQGRELDLAKPFHRLTITQAIQKYAPNYTDGQLSDDAFLRGELKRLGVDVTQPAFLNAGIGALQLALFEETAEAQLWEPTFIIDYPIEVSPLARESDTVAGITERFELFVTGREIANGFSELNDPEDQAARFRKQVEQKDAGDEEAMFFDADYIRALEYGMPPTGGCGIGIDRLVMLLTDSPTIRDVLLFPHLRRED</sequence>
<gene>
    <name evidence="1" type="primary">lysS</name>
    <name type="ordered locus">BMA10229_A3111</name>
</gene>
<protein>
    <recommendedName>
        <fullName evidence="1">Lysine--tRNA ligase</fullName>
        <ecNumber evidence="1">6.1.1.6</ecNumber>
    </recommendedName>
    <alternativeName>
        <fullName evidence="1">Lysyl-tRNA synthetase</fullName>
        <shortName evidence="1">LysRS</shortName>
    </alternativeName>
</protein>
<name>SYK_BURM9</name>
<reference key="1">
    <citation type="journal article" date="2010" name="Genome Biol. Evol.">
        <title>Continuing evolution of Burkholderia mallei through genome reduction and large-scale rearrangements.</title>
        <authorList>
            <person name="Losada L."/>
            <person name="Ronning C.M."/>
            <person name="DeShazer D."/>
            <person name="Woods D."/>
            <person name="Fedorova N."/>
            <person name="Kim H.S."/>
            <person name="Shabalina S.A."/>
            <person name="Pearson T.R."/>
            <person name="Brinkac L."/>
            <person name="Tan P."/>
            <person name="Nandi T."/>
            <person name="Crabtree J."/>
            <person name="Badger J."/>
            <person name="Beckstrom-Sternberg S."/>
            <person name="Saqib M."/>
            <person name="Schutzer S.E."/>
            <person name="Keim P."/>
            <person name="Nierman W.C."/>
        </authorList>
    </citation>
    <scope>NUCLEOTIDE SEQUENCE [LARGE SCALE GENOMIC DNA]</scope>
    <source>
        <strain>NCTC 10229</strain>
    </source>
</reference>
<feature type="chain" id="PRO_1000012852" description="Lysine--tRNA ligase">
    <location>
        <begin position="1"/>
        <end position="508"/>
    </location>
</feature>
<feature type="binding site" evidence="1">
    <location>
        <position position="418"/>
    </location>
    <ligand>
        <name>Mg(2+)</name>
        <dbReference type="ChEBI" id="CHEBI:18420"/>
        <label>1</label>
    </ligand>
</feature>
<feature type="binding site" evidence="1">
    <location>
        <position position="425"/>
    </location>
    <ligand>
        <name>Mg(2+)</name>
        <dbReference type="ChEBI" id="CHEBI:18420"/>
        <label>1</label>
    </ligand>
</feature>
<feature type="binding site" evidence="1">
    <location>
        <position position="425"/>
    </location>
    <ligand>
        <name>Mg(2+)</name>
        <dbReference type="ChEBI" id="CHEBI:18420"/>
        <label>2</label>
    </ligand>
</feature>